<accession>Q81JX2</accession>
<accession>E9QZI9</accession>
<accession>E9QZJ0</accession>
<accession>Q6HQH2</accession>
<accession>Q6KJU6</accession>
<proteinExistence type="inferred from homology"/>
<gene>
    <name evidence="1" type="primary">prmC</name>
    <name type="ordered locus">BA_5571</name>
    <name type="ordered locus">GBAA_5571</name>
    <name type="ordered locus">BAS5177</name>
</gene>
<protein>
    <recommendedName>
        <fullName evidence="1">Release factor glutamine methyltransferase</fullName>
        <shortName evidence="1">RF MTase</shortName>
        <ecNumber evidence="1">2.1.1.297</ecNumber>
    </recommendedName>
    <alternativeName>
        <fullName evidence="1">N5-glutamine methyltransferase PrmC</fullName>
    </alternativeName>
    <alternativeName>
        <fullName evidence="1">Protein-(glutamine-N5) MTase PrmC</fullName>
    </alternativeName>
    <alternativeName>
        <fullName evidence="1">Protein-glutamine N-methyltransferase PrmC</fullName>
    </alternativeName>
</protein>
<name>PRMC_BACAN</name>
<sequence>MRVYEALKWASSFLQENGRDENAGEIVLCHVLKTNRTGLLMNMREEITAEQETSFTEFIHKHVEGIPIQYMIGHEMFYGRSFFVNEEVLIPRPETEELIVGVLERIERHFGDEKLHVADIGTGSGAISITLALENKNLHVYTVDIAQESIEVAKENAKTLGAEVTFYHGDLLSPFYETGQKLDVVVSNPPYIPEEDWRGLSPVVKEHEPKRALVGGEDGLDFYRRFMEELPNVLQKKAIVAFEIGVGQGEDVKGLLQQAFPHAHVEVVFDINGKDRMVFAEIE</sequence>
<reference key="1">
    <citation type="journal article" date="2003" name="Nature">
        <title>The genome sequence of Bacillus anthracis Ames and comparison to closely related bacteria.</title>
        <authorList>
            <person name="Read T.D."/>
            <person name="Peterson S.N."/>
            <person name="Tourasse N.J."/>
            <person name="Baillie L.W."/>
            <person name="Paulsen I.T."/>
            <person name="Nelson K.E."/>
            <person name="Tettelin H."/>
            <person name="Fouts D.E."/>
            <person name="Eisen J.A."/>
            <person name="Gill S.R."/>
            <person name="Holtzapple E.K."/>
            <person name="Okstad O.A."/>
            <person name="Helgason E."/>
            <person name="Rilstone J."/>
            <person name="Wu M."/>
            <person name="Kolonay J.F."/>
            <person name="Beanan M.J."/>
            <person name="Dodson R.J."/>
            <person name="Brinkac L.M."/>
            <person name="Gwinn M.L."/>
            <person name="DeBoy R.T."/>
            <person name="Madpu R."/>
            <person name="Daugherty S.C."/>
            <person name="Durkin A.S."/>
            <person name="Haft D.H."/>
            <person name="Nelson W.C."/>
            <person name="Peterson J.D."/>
            <person name="Pop M."/>
            <person name="Khouri H.M."/>
            <person name="Radune D."/>
            <person name="Benton J.L."/>
            <person name="Mahamoud Y."/>
            <person name="Jiang L."/>
            <person name="Hance I.R."/>
            <person name="Weidman J.F."/>
            <person name="Berry K.J."/>
            <person name="Plaut R.D."/>
            <person name="Wolf A.M."/>
            <person name="Watkins K.L."/>
            <person name="Nierman W.C."/>
            <person name="Hazen A."/>
            <person name="Cline R.T."/>
            <person name="Redmond C."/>
            <person name="Thwaite J.E."/>
            <person name="White O."/>
            <person name="Salzberg S.L."/>
            <person name="Thomason B."/>
            <person name="Friedlander A.M."/>
            <person name="Koehler T.M."/>
            <person name="Hanna P.C."/>
            <person name="Kolstoe A.-B."/>
            <person name="Fraser C.M."/>
        </authorList>
    </citation>
    <scope>NUCLEOTIDE SEQUENCE [LARGE SCALE GENOMIC DNA]</scope>
    <source>
        <strain>Ames / isolate Porton</strain>
    </source>
</reference>
<reference key="2">
    <citation type="submission" date="2004-01" db="EMBL/GenBank/DDBJ databases">
        <title>Complete genome sequence of Bacillus anthracis Sterne.</title>
        <authorList>
            <person name="Brettin T.S."/>
            <person name="Bruce D."/>
            <person name="Challacombe J.F."/>
            <person name="Gilna P."/>
            <person name="Han C."/>
            <person name="Hill K."/>
            <person name="Hitchcock P."/>
            <person name="Jackson P."/>
            <person name="Keim P."/>
            <person name="Longmire J."/>
            <person name="Lucas S."/>
            <person name="Okinaka R."/>
            <person name="Richardson P."/>
            <person name="Rubin E."/>
            <person name="Tice H."/>
        </authorList>
    </citation>
    <scope>NUCLEOTIDE SEQUENCE [LARGE SCALE GENOMIC DNA]</scope>
    <source>
        <strain>Sterne</strain>
    </source>
</reference>
<reference key="3">
    <citation type="journal article" date="2009" name="J. Bacteriol.">
        <title>The complete genome sequence of Bacillus anthracis Ames 'Ancestor'.</title>
        <authorList>
            <person name="Ravel J."/>
            <person name="Jiang L."/>
            <person name="Stanley S.T."/>
            <person name="Wilson M.R."/>
            <person name="Decker R.S."/>
            <person name="Read T.D."/>
            <person name="Worsham P."/>
            <person name="Keim P.S."/>
            <person name="Salzberg S.L."/>
            <person name="Fraser-Liggett C.M."/>
            <person name="Rasko D.A."/>
        </authorList>
    </citation>
    <scope>NUCLEOTIDE SEQUENCE [LARGE SCALE GENOMIC DNA]</scope>
    <source>
        <strain>Ames ancestor</strain>
    </source>
</reference>
<comment type="function">
    <text evidence="1">Methylates the class 1 translation termination release factors RF1/PrfA and RF2/PrfB on the glutamine residue of the universally conserved GGQ motif.</text>
</comment>
<comment type="catalytic activity">
    <reaction evidence="1">
        <text>L-glutaminyl-[peptide chain release factor] + S-adenosyl-L-methionine = N(5)-methyl-L-glutaminyl-[peptide chain release factor] + S-adenosyl-L-homocysteine + H(+)</text>
        <dbReference type="Rhea" id="RHEA:42896"/>
        <dbReference type="Rhea" id="RHEA-COMP:10271"/>
        <dbReference type="Rhea" id="RHEA-COMP:10272"/>
        <dbReference type="ChEBI" id="CHEBI:15378"/>
        <dbReference type="ChEBI" id="CHEBI:30011"/>
        <dbReference type="ChEBI" id="CHEBI:57856"/>
        <dbReference type="ChEBI" id="CHEBI:59789"/>
        <dbReference type="ChEBI" id="CHEBI:61891"/>
        <dbReference type="EC" id="2.1.1.297"/>
    </reaction>
</comment>
<comment type="similarity">
    <text evidence="1">Belongs to the protein N5-glutamine methyltransferase family. PrmC subfamily.</text>
</comment>
<dbReference type="EC" id="2.1.1.297" evidence="1"/>
<dbReference type="EMBL" id="AE016879">
    <property type="protein sequence ID" value="AAP29214.1"/>
    <property type="molecule type" value="Genomic_DNA"/>
</dbReference>
<dbReference type="EMBL" id="AE017334">
    <property type="protein sequence ID" value="AAT34714.1"/>
    <property type="molecule type" value="Genomic_DNA"/>
</dbReference>
<dbReference type="EMBL" id="AE017225">
    <property type="protein sequence ID" value="AAT57466.1"/>
    <property type="molecule type" value="Genomic_DNA"/>
</dbReference>
<dbReference type="RefSeq" id="NP_847728.1">
    <property type="nucleotide sequence ID" value="NC_003997.3"/>
</dbReference>
<dbReference type="RefSeq" id="WP_001267040.1">
    <property type="nucleotide sequence ID" value="NZ_WXXJ01000038.1"/>
</dbReference>
<dbReference type="RefSeq" id="YP_031416.1">
    <property type="nucleotide sequence ID" value="NC_005945.1"/>
</dbReference>
<dbReference type="SMR" id="Q81JX2"/>
<dbReference type="STRING" id="261594.GBAA_5571"/>
<dbReference type="DNASU" id="1085260"/>
<dbReference type="GeneID" id="45025158"/>
<dbReference type="KEGG" id="ban:BA_5571"/>
<dbReference type="KEGG" id="bar:GBAA_5571"/>
<dbReference type="KEGG" id="bat:BAS5177"/>
<dbReference type="PATRIC" id="fig|198094.11.peg.5530"/>
<dbReference type="eggNOG" id="COG2890">
    <property type="taxonomic scope" value="Bacteria"/>
</dbReference>
<dbReference type="HOGENOM" id="CLU_018398_3_2_9"/>
<dbReference type="OMA" id="DFDARYW"/>
<dbReference type="OrthoDB" id="9800643at2"/>
<dbReference type="Proteomes" id="UP000000427">
    <property type="component" value="Chromosome"/>
</dbReference>
<dbReference type="Proteomes" id="UP000000594">
    <property type="component" value="Chromosome"/>
</dbReference>
<dbReference type="GO" id="GO:0003676">
    <property type="term" value="F:nucleic acid binding"/>
    <property type="evidence" value="ECO:0007669"/>
    <property type="project" value="InterPro"/>
</dbReference>
<dbReference type="GO" id="GO:0102559">
    <property type="term" value="F:protein-(glutamine-N5) methyltransferase activity"/>
    <property type="evidence" value="ECO:0007669"/>
    <property type="project" value="UniProtKB-EC"/>
</dbReference>
<dbReference type="GO" id="GO:0036009">
    <property type="term" value="F:protein-glutamine N-methyltransferase activity"/>
    <property type="evidence" value="ECO:0007669"/>
    <property type="project" value="UniProtKB-UniRule"/>
</dbReference>
<dbReference type="GO" id="GO:0032259">
    <property type="term" value="P:methylation"/>
    <property type="evidence" value="ECO:0007669"/>
    <property type="project" value="UniProtKB-KW"/>
</dbReference>
<dbReference type="CDD" id="cd02440">
    <property type="entry name" value="AdoMet_MTases"/>
    <property type="match status" value="1"/>
</dbReference>
<dbReference type="Gene3D" id="1.10.8.10">
    <property type="entry name" value="DNA helicase RuvA subunit, C-terminal domain"/>
    <property type="match status" value="1"/>
</dbReference>
<dbReference type="Gene3D" id="3.40.50.150">
    <property type="entry name" value="Vaccinia Virus protein VP39"/>
    <property type="match status" value="1"/>
</dbReference>
<dbReference type="HAMAP" id="MF_02126">
    <property type="entry name" value="RF_methyltr_PrmC"/>
    <property type="match status" value="1"/>
</dbReference>
<dbReference type="InterPro" id="IPR002052">
    <property type="entry name" value="DNA_methylase_N6_adenine_CS"/>
</dbReference>
<dbReference type="InterPro" id="IPR004556">
    <property type="entry name" value="HemK-like"/>
</dbReference>
<dbReference type="InterPro" id="IPR050320">
    <property type="entry name" value="N5-glutamine_MTase"/>
</dbReference>
<dbReference type="InterPro" id="IPR040758">
    <property type="entry name" value="PrmC_N"/>
</dbReference>
<dbReference type="InterPro" id="IPR019874">
    <property type="entry name" value="RF_methyltr_PrmC"/>
</dbReference>
<dbReference type="InterPro" id="IPR029063">
    <property type="entry name" value="SAM-dependent_MTases_sf"/>
</dbReference>
<dbReference type="InterPro" id="IPR007848">
    <property type="entry name" value="Small_mtfrase_dom"/>
</dbReference>
<dbReference type="NCBIfam" id="TIGR00536">
    <property type="entry name" value="hemK_fam"/>
    <property type="match status" value="1"/>
</dbReference>
<dbReference type="NCBIfam" id="TIGR03534">
    <property type="entry name" value="RF_mod_PrmC"/>
    <property type="match status" value="1"/>
</dbReference>
<dbReference type="PANTHER" id="PTHR18895">
    <property type="entry name" value="HEMK METHYLTRANSFERASE"/>
    <property type="match status" value="1"/>
</dbReference>
<dbReference type="PANTHER" id="PTHR18895:SF74">
    <property type="entry name" value="MTRF1L RELEASE FACTOR GLUTAMINE METHYLTRANSFERASE"/>
    <property type="match status" value="1"/>
</dbReference>
<dbReference type="Pfam" id="PF05175">
    <property type="entry name" value="MTS"/>
    <property type="match status" value="1"/>
</dbReference>
<dbReference type="Pfam" id="PF17827">
    <property type="entry name" value="PrmC_N"/>
    <property type="match status" value="1"/>
</dbReference>
<dbReference type="SUPFAM" id="SSF53335">
    <property type="entry name" value="S-adenosyl-L-methionine-dependent methyltransferases"/>
    <property type="match status" value="1"/>
</dbReference>
<evidence type="ECO:0000255" key="1">
    <source>
        <dbReference type="HAMAP-Rule" id="MF_02126"/>
    </source>
</evidence>
<feature type="chain" id="PRO_0000414499" description="Release factor glutamine methyltransferase">
    <location>
        <begin position="1"/>
        <end position="283"/>
    </location>
</feature>
<feature type="binding site" evidence="1">
    <location>
        <begin position="121"/>
        <end position="125"/>
    </location>
    <ligand>
        <name>S-adenosyl-L-methionine</name>
        <dbReference type="ChEBI" id="CHEBI:59789"/>
    </ligand>
</feature>
<feature type="binding site" evidence="1">
    <location>
        <position position="144"/>
    </location>
    <ligand>
        <name>S-adenosyl-L-methionine</name>
        <dbReference type="ChEBI" id="CHEBI:59789"/>
    </ligand>
</feature>
<feature type="binding site" evidence="1">
    <location>
        <begin position="188"/>
        <end position="191"/>
    </location>
    <ligand>
        <name>substrate</name>
    </ligand>
</feature>
<feature type="binding site" evidence="1">
    <location>
        <position position="188"/>
    </location>
    <ligand>
        <name>S-adenosyl-L-methionine</name>
        <dbReference type="ChEBI" id="CHEBI:59789"/>
    </ligand>
</feature>
<organism>
    <name type="scientific">Bacillus anthracis</name>
    <dbReference type="NCBI Taxonomy" id="1392"/>
    <lineage>
        <taxon>Bacteria</taxon>
        <taxon>Bacillati</taxon>
        <taxon>Bacillota</taxon>
        <taxon>Bacilli</taxon>
        <taxon>Bacillales</taxon>
        <taxon>Bacillaceae</taxon>
        <taxon>Bacillus</taxon>
        <taxon>Bacillus cereus group</taxon>
    </lineage>
</organism>
<keyword id="KW-0489">Methyltransferase</keyword>
<keyword id="KW-1185">Reference proteome</keyword>
<keyword id="KW-0949">S-adenosyl-L-methionine</keyword>
<keyword id="KW-0808">Transferase</keyword>